<feature type="chain" id="PRO_0000088195" description="Probable ganciclovir kinase">
    <location>
        <begin position="1"/>
        <end position="563"/>
    </location>
</feature>
<feature type="region of interest" description="Disordered" evidence="3">
    <location>
        <begin position="1"/>
        <end position="33"/>
    </location>
</feature>
<feature type="compositionally biased region" description="Polar residues" evidence="3">
    <location>
        <begin position="1"/>
        <end position="16"/>
    </location>
</feature>
<feature type="active site" description="Proton acceptor" evidence="2">
    <location>
        <position position="314"/>
    </location>
</feature>
<feature type="binding site" evidence="1">
    <location>
        <begin position="202"/>
        <end position="210"/>
    </location>
    <ligand>
        <name>ATP</name>
        <dbReference type="ChEBI" id="CHEBI:30616"/>
    </ligand>
</feature>
<feature type="binding site" evidence="1">
    <location>
        <position position="219"/>
    </location>
    <ligand>
        <name>ATP</name>
        <dbReference type="ChEBI" id="CHEBI:30616"/>
    </ligand>
</feature>
<reference key="1">
    <citation type="journal article" date="1999" name="J. Virol.">
        <title>Human herpesvirus 6B genome sequence: coding content and comparison with human herpesvirus 6A.</title>
        <authorList>
            <person name="Dominguez G."/>
            <person name="Dambaugh T.R."/>
            <person name="Stamey F.R."/>
            <person name="Dewhurst S."/>
            <person name="Inoue N."/>
            <person name="Pellett P.E."/>
        </authorList>
    </citation>
    <scope>NUCLEOTIDE SEQUENCE [LARGE SCALE GENOMIC DNA]</scope>
</reference>
<reference key="2">
    <citation type="journal article" date="1996" name="Arch. Virol.">
        <title>Restriction endonuclease mapping and molecular cloning of the human herpesvirus 6 variant B strain Z29 genome.</title>
        <authorList>
            <person name="Lindquester G.J."/>
            <person name="Inoue N."/>
            <person name="Allen R.D."/>
            <person name="Castelli J.W."/>
            <person name="Stamey F.R."/>
            <person name="Dambaugh T.R."/>
            <person name="O'Brian J.J."/>
            <person name="Danovich R.M."/>
            <person name="Frenkel N."/>
            <person name="Pellett P.E."/>
        </authorList>
    </citation>
    <scope>NUCLEOTIDE SEQUENCE [GENOMIC DNA] OF 284-563</scope>
</reference>
<name>GCVK_HHV6Z</name>
<organism>
    <name type="scientific">Human herpesvirus 6B (strain Z29)</name>
    <name type="common">HHV-6 variant B</name>
    <name type="synonym">Human B lymphotropic virus</name>
    <dbReference type="NCBI Taxonomy" id="36351"/>
    <lineage>
        <taxon>Viruses</taxon>
        <taxon>Duplodnaviria</taxon>
        <taxon>Heunggongvirae</taxon>
        <taxon>Peploviricota</taxon>
        <taxon>Herviviricetes</taxon>
        <taxon>Herpesvirales</taxon>
        <taxon>Orthoherpesviridae</taxon>
        <taxon>Betaherpesvirinae</taxon>
        <taxon>Roseolovirus</taxon>
        <taxon>Roseolovirus humanbeta6b</taxon>
        <taxon>Human herpesvirus 6B</taxon>
    </lineage>
</organism>
<dbReference type="EC" id="2.7.1.-"/>
<dbReference type="EMBL" id="AF157706">
    <property type="protein sequence ID" value="AAD49670.1"/>
    <property type="molecule type" value="Genomic_DNA"/>
</dbReference>
<dbReference type="RefSeq" id="NP_050248.1">
    <property type="nucleotide sequence ID" value="NC_000898.1"/>
</dbReference>
<dbReference type="DNASU" id="1497069"/>
<dbReference type="GeneID" id="1497069"/>
<dbReference type="KEGG" id="vg:1497069"/>
<dbReference type="Proteomes" id="UP000006930">
    <property type="component" value="Segment"/>
</dbReference>
<dbReference type="GO" id="GO:0005524">
    <property type="term" value="F:ATP binding"/>
    <property type="evidence" value="ECO:0007669"/>
    <property type="project" value="UniProtKB-KW"/>
</dbReference>
<dbReference type="GO" id="GO:0004672">
    <property type="term" value="F:protein kinase activity"/>
    <property type="evidence" value="ECO:0007669"/>
    <property type="project" value="InterPro"/>
</dbReference>
<dbReference type="GO" id="GO:0016032">
    <property type="term" value="P:viral process"/>
    <property type="evidence" value="ECO:0007669"/>
    <property type="project" value="InterPro"/>
</dbReference>
<dbReference type="Gene3D" id="1.10.510.10">
    <property type="entry name" value="Transferase(Phosphotransferase) domain 1"/>
    <property type="match status" value="1"/>
</dbReference>
<dbReference type="InterPro" id="IPR010615">
    <property type="entry name" value="Herpes_UL97"/>
</dbReference>
<dbReference type="InterPro" id="IPR011009">
    <property type="entry name" value="Kinase-like_dom_sf"/>
</dbReference>
<dbReference type="InterPro" id="IPR008266">
    <property type="entry name" value="Tyr_kinase_AS"/>
</dbReference>
<dbReference type="Pfam" id="PF06734">
    <property type="entry name" value="UL97"/>
    <property type="match status" value="1"/>
</dbReference>
<dbReference type="SUPFAM" id="SSF56112">
    <property type="entry name" value="Protein kinase-like (PK-like)"/>
    <property type="match status" value="1"/>
</dbReference>
<dbReference type="PROSITE" id="PS00109">
    <property type="entry name" value="PROTEIN_KINASE_TYR"/>
    <property type="match status" value="1"/>
</dbReference>
<keyword id="KW-0067">ATP-binding</keyword>
<keyword id="KW-0418">Kinase</keyword>
<keyword id="KW-0547">Nucleotide-binding</keyword>
<keyword id="KW-1185">Reference proteome</keyword>
<keyword id="KW-0808">Transferase</keyword>
<comment type="function">
    <text evidence="1">Phosphorylates the antiviral nucleoside analog ganciclovir.</text>
</comment>
<comment type="similarity">
    <text evidence="4">Belongs to the protein kinase superfamily. Tyr protein kinase family. HCMV ganciclovir subfamily.</text>
</comment>
<protein>
    <recommendedName>
        <fullName>Probable ganciclovir kinase</fullName>
        <ecNumber>2.7.1.-</ecNumber>
    </recommendedName>
</protein>
<gene>
    <name type="primary">U69</name>
    <name type="synonym">CH2R</name>
</gene>
<proteinExistence type="inferred from homology"/>
<organismHost>
    <name type="scientific">Homo sapiens</name>
    <name type="common">Human</name>
    <dbReference type="NCBI Taxonomy" id="9606"/>
</organismHost>
<sequence length="563" mass="63884">MDNGVETPQGQKTQPINLPPDRKRLRKHDGLGKGVKRKLFAEDSSPLKKQIPACSDMETLSSPVKFGCKSRSASALDESFGKCKHETACDCSAIEELLCHESLLDSPMKLSNAHTIFSSDKWKLELEKIIASKQIFLDMSENVELVAYGETLCNLRIFEKISSPFLFDVQSEERSYSVVYVPHNKELCGQFCQPEKTMARVLGVGAYGKVFDLDKVAIKTANEDESVISAFIAGVIRAKSGADLLSHDCVINNLLISNSVCMDHKVSLSRTYDVDLYKFEDWDVRNVMNYYSVFCKLADAVRFLNLKCRINHFDISPMNIFINHKKEIIFDAVLADYSLSEIHPEYNGTCAIAKEYDRNLQLVPISRNKFCDMFNPGFRPLVANAMILVNVCEAFDGENNPLRHCNLDLCAFAQVVLLCVLRMTDKRGCREAQLYYEKRLFALANEACRLNPLRYPFAYRDACCKVLAEHVVLLGLLFYRDVVDIYEKIYDFLDERGEFGLRDLFEATFLNNSKLTRRQPIRGGLASLQSSEYGEKLLHDLRALFLITSSADLDKDTSSLFQM</sequence>
<accession>P52446</accession>
<accession>Q9IBR7</accession>
<evidence type="ECO:0000250" key="1"/>
<evidence type="ECO:0000255" key="2">
    <source>
        <dbReference type="PROSITE-ProRule" id="PRU10028"/>
    </source>
</evidence>
<evidence type="ECO:0000256" key="3">
    <source>
        <dbReference type="SAM" id="MobiDB-lite"/>
    </source>
</evidence>
<evidence type="ECO:0000305" key="4"/>